<reference key="1">
    <citation type="journal article" date="1998" name="DNA Res.">
        <title>Structural analysis of Arabidopsis thaliana chromosome 5. IV. Sequence features of the regions of 1,456,315 bp covered by nineteen physically assigned P1 and TAC clones.</title>
        <authorList>
            <person name="Sato S."/>
            <person name="Kaneko T."/>
            <person name="Kotani H."/>
            <person name="Nakamura Y."/>
            <person name="Asamizu E."/>
            <person name="Miyajima N."/>
            <person name="Tabata S."/>
        </authorList>
    </citation>
    <scope>NUCLEOTIDE SEQUENCE [LARGE SCALE GENOMIC DNA]</scope>
    <source>
        <strain>cv. Columbia</strain>
    </source>
</reference>
<reference key="2">
    <citation type="journal article" date="2017" name="Plant J.">
        <title>Araport11: a complete reannotation of the Arabidopsis thaliana reference genome.</title>
        <authorList>
            <person name="Cheng C.Y."/>
            <person name="Krishnakumar V."/>
            <person name="Chan A.P."/>
            <person name="Thibaud-Nissen F."/>
            <person name="Schobel S."/>
            <person name="Town C.D."/>
        </authorList>
    </citation>
    <scope>GENOME REANNOTATION</scope>
    <source>
        <strain>cv. Columbia</strain>
    </source>
</reference>
<reference key="3">
    <citation type="journal article" date="2003" name="Science">
        <title>Empirical analysis of transcriptional activity in the Arabidopsis genome.</title>
        <authorList>
            <person name="Yamada K."/>
            <person name="Lim J."/>
            <person name="Dale J.M."/>
            <person name="Chen H."/>
            <person name="Shinn P."/>
            <person name="Palm C.J."/>
            <person name="Southwick A.M."/>
            <person name="Wu H.C."/>
            <person name="Kim C.J."/>
            <person name="Nguyen M."/>
            <person name="Pham P.K."/>
            <person name="Cheuk R.F."/>
            <person name="Karlin-Newmann G."/>
            <person name="Liu S.X."/>
            <person name="Lam B."/>
            <person name="Sakano H."/>
            <person name="Wu T."/>
            <person name="Yu G."/>
            <person name="Miranda M."/>
            <person name="Quach H.L."/>
            <person name="Tripp M."/>
            <person name="Chang C.H."/>
            <person name="Lee J.M."/>
            <person name="Toriumi M.J."/>
            <person name="Chan M.M."/>
            <person name="Tang C.C."/>
            <person name="Onodera C.S."/>
            <person name="Deng J.M."/>
            <person name="Akiyama K."/>
            <person name="Ansari Y."/>
            <person name="Arakawa T."/>
            <person name="Banh J."/>
            <person name="Banno F."/>
            <person name="Bowser L."/>
            <person name="Brooks S.Y."/>
            <person name="Carninci P."/>
            <person name="Chao Q."/>
            <person name="Choy N."/>
            <person name="Enju A."/>
            <person name="Goldsmith A.D."/>
            <person name="Gurjal M."/>
            <person name="Hansen N.F."/>
            <person name="Hayashizaki Y."/>
            <person name="Johnson-Hopson C."/>
            <person name="Hsuan V.W."/>
            <person name="Iida K."/>
            <person name="Karnes M."/>
            <person name="Khan S."/>
            <person name="Koesema E."/>
            <person name="Ishida J."/>
            <person name="Jiang P.X."/>
            <person name="Jones T."/>
            <person name="Kawai J."/>
            <person name="Kamiya A."/>
            <person name="Meyers C."/>
            <person name="Nakajima M."/>
            <person name="Narusaka M."/>
            <person name="Seki M."/>
            <person name="Sakurai T."/>
            <person name="Satou M."/>
            <person name="Tamse R."/>
            <person name="Vaysberg M."/>
            <person name="Wallender E.K."/>
            <person name="Wong C."/>
            <person name="Yamamura Y."/>
            <person name="Yuan S."/>
            <person name="Shinozaki K."/>
            <person name="Davis R.W."/>
            <person name="Theologis A."/>
            <person name="Ecker J.R."/>
        </authorList>
    </citation>
    <scope>NUCLEOTIDE SEQUENCE [LARGE SCALE MRNA]</scope>
    <source>
        <strain>cv. Columbia</strain>
    </source>
</reference>
<reference key="4">
    <citation type="submission" date="2002-03" db="EMBL/GenBank/DDBJ databases">
        <title>Full-length cDNA from Arabidopsis thaliana.</title>
        <authorList>
            <person name="Brover V.V."/>
            <person name="Troukhan M.E."/>
            <person name="Alexandrov N.A."/>
            <person name="Lu Y.-P."/>
            <person name="Flavell R.B."/>
            <person name="Feldmann K.A."/>
        </authorList>
    </citation>
    <scope>NUCLEOTIDE SEQUENCE [LARGE SCALE MRNA]</scope>
</reference>
<reference key="5">
    <citation type="journal article" date="2004" name="Cell. Mol. Life Sci.">
        <title>Plant glutaredoxins: still mysterious reducing systems.</title>
        <authorList>
            <person name="Rouhier N."/>
            <person name="Gelhaye E."/>
            <person name="Jacquot J.-P."/>
        </authorList>
    </citation>
    <scope>GENE FAMILY</scope>
    <scope>NOMENCLATURE</scope>
</reference>
<reference key="6">
    <citation type="journal article" date="2006" name="J. Exp. Bot.">
        <title>Genome-wide analysis of plant glutaredoxin systems.</title>
        <authorList>
            <person name="Rouhier N."/>
            <person name="Couturier J."/>
            <person name="Jacquot J.-P."/>
        </authorList>
    </citation>
    <scope>GENE FAMILY</scope>
</reference>
<keyword id="KW-0963">Cytoplasm</keyword>
<keyword id="KW-1015">Disulfide bond</keyword>
<keyword id="KW-0249">Electron transport</keyword>
<keyword id="KW-0676">Redox-active center</keyword>
<keyword id="KW-1185">Reference proteome</keyword>
<keyword id="KW-0813">Transport</keyword>
<gene>
    <name type="primary">GRXC1</name>
    <name type="ordered locus">At5g63030</name>
    <name type="ORF">MJH22.9</name>
</gene>
<dbReference type="EMBL" id="AB009051">
    <property type="protein sequence ID" value="BAB08846.1"/>
    <property type="status" value="ALT_SEQ"/>
    <property type="molecule type" value="Genomic_DNA"/>
</dbReference>
<dbReference type="EMBL" id="CP002688">
    <property type="protein sequence ID" value="AED97688.1"/>
    <property type="molecule type" value="Genomic_DNA"/>
</dbReference>
<dbReference type="EMBL" id="AY081257">
    <property type="protein sequence ID" value="AAL91146.1"/>
    <property type="molecule type" value="mRNA"/>
</dbReference>
<dbReference type="EMBL" id="AY114565">
    <property type="protein sequence ID" value="AAM47884.1"/>
    <property type="molecule type" value="mRNA"/>
</dbReference>
<dbReference type="EMBL" id="AY088825">
    <property type="protein sequence ID" value="AAM67134.1"/>
    <property type="molecule type" value="mRNA"/>
</dbReference>
<dbReference type="RefSeq" id="NP_568962.1">
    <property type="nucleotide sequence ID" value="NM_125697.3"/>
</dbReference>
<dbReference type="SMR" id="Q8L8T2"/>
<dbReference type="BioGRID" id="21666">
    <property type="interactions" value="30"/>
</dbReference>
<dbReference type="FunCoup" id="Q8L8T2">
    <property type="interactions" value="903"/>
</dbReference>
<dbReference type="IntAct" id="Q8L8T2">
    <property type="interactions" value="30"/>
</dbReference>
<dbReference type="STRING" id="3702.Q8L8T2"/>
<dbReference type="iPTMnet" id="Q8L8T2"/>
<dbReference type="PaxDb" id="3702-AT5G63030.1"/>
<dbReference type="ProteomicsDB" id="222278"/>
<dbReference type="EnsemblPlants" id="AT5G63030.1">
    <property type="protein sequence ID" value="AT5G63030.1"/>
    <property type="gene ID" value="AT5G63030"/>
</dbReference>
<dbReference type="GeneID" id="836423"/>
<dbReference type="Gramene" id="AT5G63030.1">
    <property type="protein sequence ID" value="AT5G63030.1"/>
    <property type="gene ID" value="AT5G63030"/>
</dbReference>
<dbReference type="KEGG" id="ath:AT5G63030"/>
<dbReference type="Araport" id="AT5G63030"/>
<dbReference type="TAIR" id="AT5G63030">
    <property type="gene designation" value="GRXC1"/>
</dbReference>
<dbReference type="eggNOG" id="KOG1752">
    <property type="taxonomic scope" value="Eukaryota"/>
</dbReference>
<dbReference type="HOGENOM" id="CLU_026126_7_2_1"/>
<dbReference type="InParanoid" id="Q8L8T2"/>
<dbReference type="OMA" id="GATHCPY"/>
<dbReference type="PhylomeDB" id="Q8L8T2"/>
<dbReference type="PRO" id="PR:Q8L8T2"/>
<dbReference type="Proteomes" id="UP000006548">
    <property type="component" value="Chromosome 5"/>
</dbReference>
<dbReference type="ExpressionAtlas" id="Q8L8T2">
    <property type="expression patterns" value="baseline and differential"/>
</dbReference>
<dbReference type="GO" id="GO:0005783">
    <property type="term" value="C:endoplasmic reticulum"/>
    <property type="evidence" value="ECO:0000314"/>
    <property type="project" value="TAIR"/>
</dbReference>
<dbReference type="GO" id="GO:0005777">
    <property type="term" value="C:peroxisome"/>
    <property type="evidence" value="ECO:0000314"/>
    <property type="project" value="TAIR"/>
</dbReference>
<dbReference type="CDD" id="cd03419">
    <property type="entry name" value="GRX_GRXh_1_2_like"/>
    <property type="match status" value="1"/>
</dbReference>
<dbReference type="FunFam" id="3.40.30.10:FF:000093">
    <property type="entry name" value="Glutaredoxin 2"/>
    <property type="match status" value="1"/>
</dbReference>
<dbReference type="Gene3D" id="3.40.30.10">
    <property type="entry name" value="Glutaredoxin"/>
    <property type="match status" value="1"/>
</dbReference>
<dbReference type="InterPro" id="IPR002109">
    <property type="entry name" value="Glutaredoxin"/>
</dbReference>
<dbReference type="InterPro" id="IPR011899">
    <property type="entry name" value="Glutaredoxin_euk/vir"/>
</dbReference>
<dbReference type="InterPro" id="IPR014025">
    <property type="entry name" value="Glutaredoxin_subgr"/>
</dbReference>
<dbReference type="InterPro" id="IPR036249">
    <property type="entry name" value="Thioredoxin-like_sf"/>
</dbReference>
<dbReference type="NCBIfam" id="TIGR02180">
    <property type="entry name" value="GRX_euk"/>
    <property type="match status" value="1"/>
</dbReference>
<dbReference type="PANTHER" id="PTHR45694">
    <property type="entry name" value="GLUTAREDOXIN 2"/>
    <property type="match status" value="1"/>
</dbReference>
<dbReference type="PANTHER" id="PTHR45694:SF13">
    <property type="entry name" value="GLUTAREDOXIN-C1"/>
    <property type="match status" value="1"/>
</dbReference>
<dbReference type="Pfam" id="PF00462">
    <property type="entry name" value="Glutaredoxin"/>
    <property type="match status" value="1"/>
</dbReference>
<dbReference type="PRINTS" id="PR00160">
    <property type="entry name" value="GLUTAREDOXIN"/>
</dbReference>
<dbReference type="SUPFAM" id="SSF52833">
    <property type="entry name" value="Thioredoxin-like"/>
    <property type="match status" value="1"/>
</dbReference>
<dbReference type="PROSITE" id="PS51354">
    <property type="entry name" value="GLUTAREDOXIN_2"/>
    <property type="match status" value="1"/>
</dbReference>
<protein>
    <recommendedName>
        <fullName>Glutaredoxin-C1</fullName>
        <shortName>AtGrxC1</shortName>
    </recommendedName>
</protein>
<sequence length="125" mass="13611">MGSMFSGNRMSKEEMEVVVNKAKEIVSAYPVVVFSKTYCGYCQRVKQLLTQLGATFKVLELDEMSDGGEIQSALSEWTGQTTVPNVFIKGNHIGGCDRVMETNKQGKLVPLLTEAGAIADNSSQL</sequence>
<name>GRXC1_ARATH</name>
<evidence type="ECO:0000250" key="1"/>
<evidence type="ECO:0000255" key="2">
    <source>
        <dbReference type="PROSITE-ProRule" id="PRU00686"/>
    </source>
</evidence>
<evidence type="ECO:0000305" key="3"/>
<proteinExistence type="evidence at transcript level"/>
<organism>
    <name type="scientific">Arabidopsis thaliana</name>
    <name type="common">Mouse-ear cress</name>
    <dbReference type="NCBI Taxonomy" id="3702"/>
    <lineage>
        <taxon>Eukaryota</taxon>
        <taxon>Viridiplantae</taxon>
        <taxon>Streptophyta</taxon>
        <taxon>Embryophyta</taxon>
        <taxon>Tracheophyta</taxon>
        <taxon>Spermatophyta</taxon>
        <taxon>Magnoliopsida</taxon>
        <taxon>eudicotyledons</taxon>
        <taxon>Gunneridae</taxon>
        <taxon>Pentapetalae</taxon>
        <taxon>rosids</taxon>
        <taxon>malvids</taxon>
        <taxon>Brassicales</taxon>
        <taxon>Brassicaceae</taxon>
        <taxon>Camelineae</taxon>
        <taxon>Arabidopsis</taxon>
    </lineage>
</organism>
<comment type="function">
    <text evidence="1">Has a glutathione-disulfide oxidoreductase activity in the presence of NADPH and glutathione reductase. Reduces low molecular weight disulfides and proteins (By similarity).</text>
</comment>
<comment type="subcellular location">
    <subcellularLocation>
        <location evidence="1">Cytoplasm</location>
    </subcellularLocation>
</comment>
<comment type="similarity">
    <text evidence="3">Belongs to the glutaredoxin family. CPYC subfamily.</text>
</comment>
<comment type="sequence caution" evidence="3">
    <conflict type="erroneous gene model prediction">
        <sequence resource="EMBL-CDS" id="BAB08846"/>
    </conflict>
</comment>
<accession>Q8L8T2</accession>
<accession>Q8RXH1</accession>
<accession>Q9FM49</accession>
<feature type="chain" id="PRO_0000268708" description="Glutaredoxin-C1">
    <location>
        <begin position="1"/>
        <end position="125"/>
    </location>
</feature>
<feature type="domain" description="Glutaredoxin" evidence="2">
    <location>
        <begin position="19"/>
        <end position="119"/>
    </location>
</feature>
<feature type="disulfide bond" description="Redox-active" evidence="1">
    <location>
        <begin position="39"/>
        <end position="42"/>
    </location>
</feature>
<feature type="sequence conflict" description="In Ref. 4; AAM67134." evidence="3" ref="4">
    <original>N</original>
    <variation>K</variation>
    <location>
        <position position="91"/>
    </location>
</feature>